<comment type="function">
    <text evidence="1">Negative regulator of FtsZ ring formation; modulates the frequency and position of FtsZ ring formation. Inhibits FtsZ ring formation at polar sites. Interacts either with FtsZ or with one of its binding partners to promote depolymerization.</text>
</comment>
<comment type="subcellular location">
    <subcellularLocation>
        <location evidence="1">Cell membrane</location>
        <topology evidence="1">Single-pass membrane protein</topology>
    </subcellularLocation>
    <text evidence="1">Colocalized with FtsZ to the nascent septal site.</text>
</comment>
<comment type="similarity">
    <text evidence="1">Belongs to the EzrA family.</text>
</comment>
<feature type="chain" id="PRO_1000083320" description="Septation ring formation regulator EzrA">
    <location>
        <begin position="1"/>
        <end position="564"/>
    </location>
</feature>
<feature type="topological domain" description="Extracellular" evidence="1">
    <location>
        <begin position="1"/>
        <end position="4"/>
    </location>
</feature>
<feature type="transmembrane region" description="Helical" evidence="1">
    <location>
        <begin position="5"/>
        <end position="23"/>
    </location>
</feature>
<feature type="topological domain" description="Cytoplasmic" evidence="1">
    <location>
        <begin position="24"/>
        <end position="564"/>
    </location>
</feature>
<feature type="coiled-coil region" evidence="1">
    <location>
        <begin position="99"/>
        <end position="138"/>
    </location>
</feature>
<feature type="coiled-coil region" evidence="1">
    <location>
        <begin position="190"/>
        <end position="223"/>
    </location>
</feature>
<feature type="coiled-coil region" evidence="1">
    <location>
        <begin position="271"/>
        <end position="300"/>
    </location>
</feature>
<feature type="coiled-coil region" evidence="1">
    <location>
        <begin position="350"/>
        <end position="435"/>
    </location>
</feature>
<feature type="coiled-coil region" evidence="1">
    <location>
        <begin position="471"/>
        <end position="550"/>
    </location>
</feature>
<gene>
    <name evidence="1" type="primary">ezrA</name>
    <name type="ordered locus">SaurJH9_1773</name>
</gene>
<evidence type="ECO:0000255" key="1">
    <source>
        <dbReference type="HAMAP-Rule" id="MF_00728"/>
    </source>
</evidence>
<protein>
    <recommendedName>
        <fullName evidence="1">Septation ring formation regulator EzrA</fullName>
    </recommendedName>
</protein>
<organism>
    <name type="scientific">Staphylococcus aureus (strain JH9)</name>
    <dbReference type="NCBI Taxonomy" id="359786"/>
    <lineage>
        <taxon>Bacteria</taxon>
        <taxon>Bacillati</taxon>
        <taxon>Bacillota</taxon>
        <taxon>Bacilli</taxon>
        <taxon>Bacillales</taxon>
        <taxon>Staphylococcaceae</taxon>
        <taxon>Staphylococcus</taxon>
    </lineage>
</organism>
<dbReference type="EMBL" id="CP000703">
    <property type="protein sequence ID" value="ABQ49563.1"/>
    <property type="molecule type" value="Genomic_DNA"/>
</dbReference>
<dbReference type="RefSeq" id="WP_000244865.1">
    <property type="nucleotide sequence ID" value="NC_009487.1"/>
</dbReference>
<dbReference type="SMR" id="A5ITP0"/>
<dbReference type="KEGG" id="saj:SaurJH9_1773"/>
<dbReference type="HOGENOM" id="CLU_034079_1_0_9"/>
<dbReference type="GO" id="GO:0005886">
    <property type="term" value="C:plasma membrane"/>
    <property type="evidence" value="ECO:0007669"/>
    <property type="project" value="UniProtKB-SubCell"/>
</dbReference>
<dbReference type="GO" id="GO:0005940">
    <property type="term" value="C:septin ring"/>
    <property type="evidence" value="ECO:0007669"/>
    <property type="project" value="InterPro"/>
</dbReference>
<dbReference type="GO" id="GO:0000917">
    <property type="term" value="P:division septum assembly"/>
    <property type="evidence" value="ECO:0007669"/>
    <property type="project" value="UniProtKB-KW"/>
</dbReference>
<dbReference type="GO" id="GO:0000921">
    <property type="term" value="P:septin ring assembly"/>
    <property type="evidence" value="ECO:0007669"/>
    <property type="project" value="InterPro"/>
</dbReference>
<dbReference type="HAMAP" id="MF_00728">
    <property type="entry name" value="EzrA"/>
    <property type="match status" value="1"/>
</dbReference>
<dbReference type="InterPro" id="IPR010379">
    <property type="entry name" value="EzrA"/>
</dbReference>
<dbReference type="NCBIfam" id="NF003412">
    <property type="entry name" value="PRK04778.1-6"/>
    <property type="match status" value="1"/>
</dbReference>
<dbReference type="Pfam" id="PF06160">
    <property type="entry name" value="EzrA"/>
    <property type="match status" value="1"/>
</dbReference>
<proteinExistence type="inferred from homology"/>
<keyword id="KW-0131">Cell cycle</keyword>
<keyword id="KW-0132">Cell division</keyword>
<keyword id="KW-1003">Cell membrane</keyword>
<keyword id="KW-0175">Coiled coil</keyword>
<keyword id="KW-0472">Membrane</keyword>
<keyword id="KW-0717">Septation</keyword>
<keyword id="KW-0812">Transmembrane</keyword>
<keyword id="KW-1133">Transmembrane helix</keyword>
<sequence>MVLYIILAIIVIILIAVGVLFYLRSNKRQIIEKAIERKNEIETLPFDQNLAQLSKLNLKGETKTKYDAMKKDNVESTNKYLAPVEEKIHNAEALLDKFSFNASQSEIDDANELMDSYEQSYQQQLEDVNEIIALYKDNDELYDKCKVDYREMKRDVLANRHQFGEAASLLETEIEKFEPRLEQYEVLKADGNYVQAHNHIAALNEQMKQLRSYMEEIPELIRETQKELPGQFQDLKYGCRDLKVEGYDLDHVKVDSTLQSLKTELSFVEPLISRLELEEANDKLANINDKLDDMYDLIEHEVKAKNDVEETKDIITDNLFKAKDMNYTLQTEIEYVRENYYINESDAQSVRQFENEIQSLISVYDDILKEMSKSAVRYSEVQDNLQYLEDHVTVINDKQEKLQNHLIQLREDEAEAEDNLLRVQSKKEEVYRRLLASNLTSVPERFIIMKNEIDHEVRDVNEQFSERPIHVKQLKDKVSKIVIQMNTFEDEANDVLVNAVYAEKLIQYGNRYRKDYSNVDKSLNEAERLFKNNRYKRAIEIAEQALESVEPGVTKHIEEEVIKQ</sequence>
<reference key="1">
    <citation type="submission" date="2007-05" db="EMBL/GenBank/DDBJ databases">
        <title>Complete sequence of chromosome of Staphylococcus aureus subsp. aureus JH9.</title>
        <authorList>
            <consortium name="US DOE Joint Genome Institute"/>
            <person name="Copeland A."/>
            <person name="Lucas S."/>
            <person name="Lapidus A."/>
            <person name="Barry K."/>
            <person name="Detter J.C."/>
            <person name="Glavina del Rio T."/>
            <person name="Hammon N."/>
            <person name="Israni S."/>
            <person name="Pitluck S."/>
            <person name="Chain P."/>
            <person name="Malfatti S."/>
            <person name="Shin M."/>
            <person name="Vergez L."/>
            <person name="Schmutz J."/>
            <person name="Larimer F."/>
            <person name="Land M."/>
            <person name="Hauser L."/>
            <person name="Kyrpides N."/>
            <person name="Kim E."/>
            <person name="Tomasz A."/>
            <person name="Richardson P."/>
        </authorList>
    </citation>
    <scope>NUCLEOTIDE SEQUENCE [LARGE SCALE GENOMIC DNA]</scope>
    <source>
        <strain>JH9</strain>
    </source>
</reference>
<accession>A5ITP0</accession>
<name>EZRA_STAA9</name>